<feature type="chain" id="PRO_0000066486" description="Yop proteins translocation protein I">
    <location>
        <begin position="1"/>
        <end position="115"/>
    </location>
</feature>
<accession>Q01250</accession>
<comment type="function">
    <text>Belongs to an operon involved in the translocation of Yop proteins across the bacterial membranes or in the specific control of this function.</text>
</comment>
<comment type="induction">
    <text>At 37 degrees Celsius in the absence of calcium.</text>
</comment>
<comment type="similarity">
    <text evidence="1">Belongs to the YscI/HrpB family.</text>
</comment>
<sequence length="115" mass="12698">MPNIEIAQADEVIITTLEELGPVEPTTEQIMRFDAAMSEDTQGLGHSLLKEVSDIQKTFKTAKSDLHTKLAVSVDNPNDLMLMQWSLIRITIQEELIAKTAGRMSQNVETLSKGG</sequence>
<gene>
    <name type="primary">yscI</name>
</gene>
<name>YSCI_YEREN</name>
<evidence type="ECO:0000305" key="1"/>
<dbReference type="EMBL" id="M74011">
    <property type="protein sequence ID" value="AAC37026.1"/>
    <property type="molecule type" value="Genomic_DNA"/>
</dbReference>
<dbReference type="PIR" id="I40361">
    <property type="entry name" value="I40361"/>
</dbReference>
<dbReference type="RefSeq" id="WP_010891231.1">
    <property type="nucleotide sequence ID" value="NZ_KN150737.1"/>
</dbReference>
<dbReference type="SMR" id="Q01250"/>
<dbReference type="KEGG" id="yet:CH48_4194"/>
<dbReference type="GO" id="GO:0030254">
    <property type="term" value="P:protein secretion by the type III secretion system"/>
    <property type="evidence" value="ECO:0007669"/>
    <property type="project" value="InterPro"/>
</dbReference>
<dbReference type="InterPro" id="IPR012670">
    <property type="entry name" value="T3SS_YscI/HrpB"/>
</dbReference>
<dbReference type="NCBIfam" id="TIGR02497">
    <property type="entry name" value="yscI_hrpB_dom"/>
    <property type="match status" value="1"/>
</dbReference>
<dbReference type="Pfam" id="PF17001">
    <property type="entry name" value="T3SS_basalb_I"/>
    <property type="match status" value="1"/>
</dbReference>
<organism>
    <name type="scientific">Yersinia enterocolitica</name>
    <dbReference type="NCBI Taxonomy" id="630"/>
    <lineage>
        <taxon>Bacteria</taxon>
        <taxon>Pseudomonadati</taxon>
        <taxon>Pseudomonadota</taxon>
        <taxon>Gammaproteobacteria</taxon>
        <taxon>Enterobacterales</taxon>
        <taxon>Yersiniaceae</taxon>
        <taxon>Yersinia</taxon>
    </lineage>
</organism>
<protein>
    <recommendedName>
        <fullName>Yop proteins translocation protein I</fullName>
    </recommendedName>
</protein>
<keyword id="KW-0614">Plasmid</keyword>
<keyword id="KW-0843">Virulence</keyword>
<proteinExistence type="evidence at transcript level"/>
<geneLocation type="plasmid">
    <name>pYV</name>
</geneLocation>
<reference key="1">
    <citation type="journal article" date="1991" name="J. Bacteriol.">
        <title>Analysis of virC, an operon involved in the secretion of Yop proteins by Yersinia enterocolitica.</title>
        <authorList>
            <person name="Michiels T."/>
            <person name="Vanooteghem J.-C."/>
            <person name="de Rouvroit C."/>
            <person name="China B."/>
            <person name="Gustin A."/>
            <person name="Boudry P."/>
            <person name="Cornelis G.R."/>
        </authorList>
    </citation>
    <scope>NUCLEOTIDE SEQUENCE [GENOMIC DNA]</scope>
    <source>
        <strain>439-80 / Serotype O:9</strain>
    </source>
</reference>